<feature type="transit peptide" description="Mitochondrion" evidence="1">
    <location>
        <begin position="1"/>
        <end position="66"/>
    </location>
</feature>
<feature type="chain" id="PRO_0000002562" description="ATP synthase F(0) complex subunit C2, mitochondrial">
    <location>
        <begin position="67"/>
        <end position="141"/>
    </location>
</feature>
<feature type="transmembrane region" description="Helical" evidence="2">
    <location>
        <begin position="82"/>
        <end position="102"/>
    </location>
</feature>
<feature type="transmembrane region" description="Helical" evidence="2">
    <location>
        <begin position="117"/>
        <end position="137"/>
    </location>
</feature>
<feature type="site" description="Reversibly protonated during proton transport" evidence="1">
    <location>
        <position position="124"/>
    </location>
</feature>
<feature type="modified residue" description="N6,N6,N6-trimethyllysine" evidence="4">
    <location>
        <position position="109"/>
    </location>
</feature>
<feature type="splice variant" id="VSP_037348" description="In isoform 2." evidence="6">
    <original>M</original>
    <variation>MPELILYVAITLSVAERLVGPGHACAEPSFRSSRCSAPLCLLCSGSSSPATAPHPLKM</variation>
    <location>
        <position position="1"/>
    </location>
</feature>
<feature type="splice variant" id="VSP_037349" description="In isoform 3." evidence="6">
    <original>M</original>
    <variation>MPELILSPATAPHPLKM</variation>
    <location>
        <position position="1"/>
    </location>
</feature>
<feature type="sequence variant" id="VAR_011920" description="In dbSNP:rs13819.">
    <original>S</original>
    <variation>I</variation>
    <location>
        <position position="58"/>
    </location>
</feature>
<feature type="sequence variant" id="VAR_011921" description="In dbSNP:rs1803177.">
    <original>M</original>
    <variation>K</variation>
    <location>
        <position position="141"/>
    </location>
</feature>
<feature type="sequence conflict" description="In Ref. 3; BAG52118." evidence="6" ref="3">
    <original>A</original>
    <variation>T</variation>
    <location>
        <position position="63"/>
    </location>
</feature>
<feature type="sequence conflict" description="In Ref. 3; BAG52118." evidence="6" ref="3">
    <original>S</original>
    <variation>F</variation>
    <location>
        <position position="107"/>
    </location>
</feature>
<keyword id="KW-0025">Alternative splicing</keyword>
<keyword id="KW-0138">CF(0)</keyword>
<keyword id="KW-0375">Hydrogen ion transport</keyword>
<keyword id="KW-0406">Ion transport</keyword>
<keyword id="KW-0446">Lipid-binding</keyword>
<keyword id="KW-0472">Membrane</keyword>
<keyword id="KW-0488">Methylation</keyword>
<keyword id="KW-0496">Mitochondrion</keyword>
<keyword id="KW-1267">Proteomics identification</keyword>
<keyword id="KW-1185">Reference proteome</keyword>
<keyword id="KW-0809">Transit peptide</keyword>
<keyword id="KW-0812">Transmembrane</keyword>
<keyword id="KW-1133">Transmembrane helix</keyword>
<keyword id="KW-0813">Transport</keyword>
<name>AT5G2_HUMAN</name>
<evidence type="ECO:0000250" key="1"/>
<evidence type="ECO:0000255" key="2"/>
<evidence type="ECO:0000269" key="3">
    <source>
    </source>
</evidence>
<evidence type="ECO:0000269" key="4">
    <source>
    </source>
</evidence>
<evidence type="ECO:0000269" key="5">
    <source>
    </source>
</evidence>
<evidence type="ECO:0000305" key="6"/>
<evidence type="ECO:0000312" key="7">
    <source>
        <dbReference type="HGNC" id="HGNC:842"/>
    </source>
</evidence>
<comment type="function">
    <text>Mitochondrial membrane ATP synthase (F(1)F(0) ATP synthase or Complex V) produces ATP from ADP in the presence of a proton gradient across the membrane which is generated by electron transport complexes of the respiratory chain. F-type ATPases consist of two structural domains, F(1) - containing the extramembraneous catalytic core and F(0) - containing the membrane proton channel, linked together by a central stalk and a peripheral stalk. During catalysis, ATP synthesis in the catalytic domain of F(1) is coupled via a rotary mechanism of the central stalk subunits to proton translocation. Part of the complex F(0) domain. A homomeric c-ring of probably 10 subunits is part of the complex rotary element.</text>
</comment>
<comment type="subunit">
    <text evidence="3 5">F-type ATPases have 2 components, CF(1) - the catalytic core - and CF(0) - the membrane proton channel. CF(1) has five subunits: alpha(3), beta(3), gamma(1), delta(1), epsilon(1). CF(0) has three main subunits: a, b and c (PubMed:8328972). Interacts with DNAJC30; interaction is direct (PubMed:30318146).</text>
</comment>
<comment type="subcellular location">
    <subcellularLocation>
        <location>Mitochondrion membrane</location>
        <topology>Multi-pass membrane protein</topology>
    </subcellularLocation>
</comment>
<comment type="alternative products">
    <event type="alternative splicing"/>
    <isoform>
        <id>Q06055-1</id>
        <name>1</name>
        <sequence type="displayed"/>
    </isoform>
    <isoform>
        <id>Q06055-2</id>
        <name>2</name>
        <sequence type="described" ref="VSP_037348"/>
    </isoform>
    <isoform>
        <id>Q06055-3</id>
        <name>3</name>
        <sequence type="described" ref="VSP_037349"/>
    </isoform>
</comment>
<comment type="PTM">
    <text evidence="4">Trimethylated by ATPSCKMT at Lys-109. Methylation is required for proper incorporation of the C subunit into the ATP synthase complex and mitochondrial respiration.</text>
</comment>
<comment type="miscellaneous">
    <text>There are three genes which encode the mitochondrial ATP synthase proteolipid and they specify precursors with different import sequences but identical mature proteins. Is the major protein stored in the storage bodies of animals or humans affected with ceroid lipofuscinosis (Batten disease).</text>
</comment>
<comment type="similarity">
    <text evidence="6">Belongs to the ATPase C chain family.</text>
</comment>
<organism>
    <name type="scientific">Homo sapiens</name>
    <name type="common">Human</name>
    <dbReference type="NCBI Taxonomy" id="9606"/>
    <lineage>
        <taxon>Eukaryota</taxon>
        <taxon>Metazoa</taxon>
        <taxon>Chordata</taxon>
        <taxon>Craniata</taxon>
        <taxon>Vertebrata</taxon>
        <taxon>Euteleostomi</taxon>
        <taxon>Mammalia</taxon>
        <taxon>Eutheria</taxon>
        <taxon>Euarchontoglires</taxon>
        <taxon>Primates</taxon>
        <taxon>Haplorrhini</taxon>
        <taxon>Catarrhini</taxon>
        <taxon>Hominidae</taxon>
        <taxon>Homo</taxon>
    </lineage>
</organism>
<accession>Q06055</accession>
<accession>B3KQQ6</accession>
<dbReference type="EMBL" id="X69908">
    <property type="protein sequence ID" value="CAA49533.1"/>
    <property type="molecule type" value="Genomic_DNA"/>
</dbReference>
<dbReference type="EMBL" id="D13119">
    <property type="protein sequence ID" value="BAA02421.1"/>
    <property type="molecule type" value="mRNA"/>
</dbReference>
<dbReference type="EMBL" id="AK075351">
    <property type="protein sequence ID" value="BAG52118.1"/>
    <property type="molecule type" value="mRNA"/>
</dbReference>
<dbReference type="EMBL" id="AC073594">
    <property type="status" value="NOT_ANNOTATED_CDS"/>
    <property type="molecule type" value="Genomic_DNA"/>
</dbReference>
<dbReference type="EMBL" id="BC020826">
    <property type="protein sequence ID" value="AAH20826.1"/>
    <property type="molecule type" value="mRNA"/>
</dbReference>
<dbReference type="CCDS" id="CCDS31812.1">
    <molecule id="Q06055-3"/>
</dbReference>
<dbReference type="CCDS" id="CCDS81694.1">
    <molecule id="Q06055-1"/>
</dbReference>
<dbReference type="PIR" id="S34067">
    <property type="entry name" value="S34067"/>
</dbReference>
<dbReference type="RefSeq" id="NP_001002031.1">
    <molecule id="Q06055-3"/>
    <property type="nucleotide sequence ID" value="NM_001002031.4"/>
</dbReference>
<dbReference type="RefSeq" id="NP_001317198.1">
    <molecule id="Q06055-1"/>
    <property type="nucleotide sequence ID" value="NM_001330269.2"/>
</dbReference>
<dbReference type="RefSeq" id="NP_001356682.1">
    <molecule id="Q06055-1"/>
    <property type="nucleotide sequence ID" value="NM_001369753.1"/>
</dbReference>
<dbReference type="RefSeq" id="NP_001356683.1">
    <molecule id="Q06055-1"/>
    <property type="nucleotide sequence ID" value="NM_001369754.1"/>
</dbReference>
<dbReference type="RefSeq" id="NP_001356684.1">
    <molecule id="Q06055-1"/>
    <property type="nucleotide sequence ID" value="NM_001369755.1"/>
</dbReference>
<dbReference type="RefSeq" id="NP_005167.3">
    <molecule id="Q06055-1"/>
    <property type="nucleotide sequence ID" value="NM_005176.7"/>
</dbReference>
<dbReference type="RefSeq" id="XP_016874949.1">
    <property type="nucleotide sequence ID" value="XM_017019460.1"/>
</dbReference>
<dbReference type="RefSeq" id="XP_016874950.1">
    <property type="nucleotide sequence ID" value="XM_017019461.1"/>
</dbReference>
<dbReference type="RefSeq" id="XP_047284945.1">
    <molecule id="Q06055-1"/>
    <property type="nucleotide sequence ID" value="XM_047428989.1"/>
</dbReference>
<dbReference type="RefSeq" id="XP_054228230.1">
    <molecule id="Q06055-2"/>
    <property type="nucleotide sequence ID" value="XM_054372255.1"/>
</dbReference>
<dbReference type="RefSeq" id="XP_054228231.1">
    <molecule id="Q06055-3"/>
    <property type="nucleotide sequence ID" value="XM_054372256.1"/>
</dbReference>
<dbReference type="RefSeq" id="XP_054228232.1">
    <molecule id="Q06055-1"/>
    <property type="nucleotide sequence ID" value="XM_054372257.1"/>
</dbReference>
<dbReference type="SMR" id="Q06055"/>
<dbReference type="BioGRID" id="107002">
    <property type="interactions" value="6"/>
</dbReference>
<dbReference type="ComplexPortal" id="CPX-6151">
    <property type="entry name" value="Mitochondrial proton-transporting ATP synthase complex"/>
</dbReference>
<dbReference type="FunCoup" id="Q06055">
    <property type="interactions" value="496"/>
</dbReference>
<dbReference type="IntAct" id="Q06055">
    <property type="interactions" value="7"/>
</dbReference>
<dbReference type="MINT" id="Q06055"/>
<dbReference type="STRING" id="9606.ENSP00000499883"/>
<dbReference type="TCDB" id="3.A.2.1.15">
    <property type="family name" value="the h+- or na+-translocating f-type, v-type and a-type atpase (f-atpase) superfamily"/>
</dbReference>
<dbReference type="GlyGen" id="Q06055">
    <property type="glycosylation" value="1 site, 1 O-linked glycan (1 site)"/>
</dbReference>
<dbReference type="iPTMnet" id="Q06055"/>
<dbReference type="PhosphoSitePlus" id="Q06055"/>
<dbReference type="SwissPalm" id="Q06055"/>
<dbReference type="BioMuta" id="ATP5G2"/>
<dbReference type="DMDM" id="461592"/>
<dbReference type="jPOST" id="Q06055"/>
<dbReference type="MassIVE" id="Q06055"/>
<dbReference type="PaxDb" id="9606-ENSP00000377878"/>
<dbReference type="PeptideAtlas" id="Q06055"/>
<dbReference type="ProteomicsDB" id="58411">
    <molecule id="Q06055-1"/>
</dbReference>
<dbReference type="ProteomicsDB" id="58412">
    <molecule id="Q06055-2"/>
</dbReference>
<dbReference type="ProteomicsDB" id="58413">
    <molecule id="Q06055-3"/>
</dbReference>
<dbReference type="Pumba" id="Q06055"/>
<dbReference type="TopDownProteomics" id="Q06055-1">
    <molecule id="Q06055-1"/>
</dbReference>
<dbReference type="TopDownProteomics" id="Q06055-2">
    <molecule id="Q06055-2"/>
</dbReference>
<dbReference type="TopDownProteomics" id="Q06055-3">
    <molecule id="Q06055-3"/>
</dbReference>
<dbReference type="Antibodypedia" id="27225">
    <property type="antibodies" value="160 antibodies from 29 providers"/>
</dbReference>
<dbReference type="DNASU" id="517"/>
<dbReference type="Ensembl" id="ENST00000338662.6">
    <molecule id="Q06055-1"/>
    <property type="protein sequence ID" value="ENSP00000340315.6"/>
    <property type="gene ID" value="ENSG00000135390.21"/>
</dbReference>
<dbReference type="Ensembl" id="ENST00000394349.9">
    <molecule id="Q06055-1"/>
    <property type="protein sequence ID" value="ENSP00000377878.5"/>
    <property type="gene ID" value="ENSG00000135390.21"/>
</dbReference>
<dbReference type="Ensembl" id="ENST00000549164.5">
    <molecule id="Q06055-1"/>
    <property type="protein sequence ID" value="ENSP00000447317.1"/>
    <property type="gene ID" value="ENSG00000135390.21"/>
</dbReference>
<dbReference type="Ensembl" id="ENST00000552242.5">
    <molecule id="Q06055-1"/>
    <property type="protein sequence ID" value="ENSP00000448801.2"/>
    <property type="gene ID" value="ENSG00000135390.21"/>
</dbReference>
<dbReference type="Ensembl" id="ENST00000673498.1">
    <molecule id="Q06055-3"/>
    <property type="protein sequence ID" value="ENSP00000499883.1"/>
    <property type="gene ID" value="ENSG00000135390.21"/>
</dbReference>
<dbReference type="GeneID" id="517"/>
<dbReference type="KEGG" id="hsa:517"/>
<dbReference type="MANE-Select" id="ENST00000394349.9">
    <property type="protein sequence ID" value="ENSP00000377878.5"/>
    <property type="RefSeq nucleotide sequence ID" value="NM_005176.7"/>
    <property type="RefSeq protein sequence ID" value="NP_005167.3"/>
</dbReference>
<dbReference type="UCSC" id="uc001sec.4">
    <molecule id="Q06055-1"/>
    <property type="organism name" value="human"/>
</dbReference>
<dbReference type="AGR" id="HGNC:842"/>
<dbReference type="CTD" id="517"/>
<dbReference type="DisGeNET" id="517"/>
<dbReference type="GeneCards" id="ATP5MC2"/>
<dbReference type="HGNC" id="HGNC:842">
    <property type="gene designation" value="ATP5MC2"/>
</dbReference>
<dbReference type="HPA" id="ENSG00000135390">
    <property type="expression patterns" value="Low tissue specificity"/>
</dbReference>
<dbReference type="MalaCards" id="ATP5MC2"/>
<dbReference type="MIM" id="603193">
    <property type="type" value="gene"/>
</dbReference>
<dbReference type="neXtProt" id="NX_Q06055"/>
<dbReference type="OpenTargets" id="ENSG00000135390"/>
<dbReference type="PharmGKB" id="PA25132"/>
<dbReference type="VEuPathDB" id="HostDB:ENSG00000135390"/>
<dbReference type="eggNOG" id="KOG3025">
    <property type="taxonomic scope" value="Eukaryota"/>
</dbReference>
<dbReference type="GeneTree" id="ENSGT00940000157455"/>
<dbReference type="HOGENOM" id="CLU_116822_1_0_1"/>
<dbReference type="InParanoid" id="Q06055"/>
<dbReference type="OrthoDB" id="438052at2759"/>
<dbReference type="PAN-GO" id="Q06055">
    <property type="GO annotations" value="2 GO annotations based on evolutionary models"/>
</dbReference>
<dbReference type="PhylomeDB" id="Q06055"/>
<dbReference type="TreeFam" id="TF300140"/>
<dbReference type="BioCyc" id="MetaCyc:HS05994-MONOMER"/>
<dbReference type="PathwayCommons" id="Q06055"/>
<dbReference type="Reactome" id="R-HSA-163210">
    <property type="pathway name" value="Formation of ATP by chemiosmotic coupling"/>
</dbReference>
<dbReference type="Reactome" id="R-HSA-8949613">
    <property type="pathway name" value="Cristae formation"/>
</dbReference>
<dbReference type="SignaLink" id="Q06055"/>
<dbReference type="BioGRID-ORCS" id="517">
    <property type="hits" value="52 hits in 1149 CRISPR screens"/>
</dbReference>
<dbReference type="ChiTaRS" id="ATP5MC2">
    <property type="organism name" value="human"/>
</dbReference>
<dbReference type="GeneWiki" id="ATP5G2"/>
<dbReference type="GenomeRNAi" id="517"/>
<dbReference type="Pharos" id="Q06055">
    <property type="development level" value="Tbio"/>
</dbReference>
<dbReference type="PRO" id="PR:Q06055"/>
<dbReference type="Proteomes" id="UP000005640">
    <property type="component" value="Chromosome 12"/>
</dbReference>
<dbReference type="RNAct" id="Q06055">
    <property type="molecule type" value="protein"/>
</dbReference>
<dbReference type="Bgee" id="ENSG00000135390">
    <property type="expression patterns" value="Expressed in apex of heart and 207 other cell types or tissues"/>
</dbReference>
<dbReference type="ExpressionAtlas" id="Q06055">
    <property type="expression patterns" value="baseline and differential"/>
</dbReference>
<dbReference type="GO" id="GO:0005743">
    <property type="term" value="C:mitochondrial inner membrane"/>
    <property type="evidence" value="ECO:0000304"/>
    <property type="project" value="Reactome"/>
</dbReference>
<dbReference type="GO" id="GO:0005739">
    <property type="term" value="C:mitochondrion"/>
    <property type="evidence" value="ECO:0006056"/>
    <property type="project" value="FlyBase"/>
</dbReference>
<dbReference type="GO" id="GO:0045259">
    <property type="term" value="C:proton-transporting ATP synthase complex"/>
    <property type="evidence" value="ECO:0000303"/>
    <property type="project" value="ComplexPortal"/>
</dbReference>
<dbReference type="GO" id="GO:0033177">
    <property type="term" value="C:proton-transporting two-sector ATPase complex, proton-transporting domain"/>
    <property type="evidence" value="ECO:0007669"/>
    <property type="project" value="InterPro"/>
</dbReference>
<dbReference type="GO" id="GO:0008289">
    <property type="term" value="F:lipid binding"/>
    <property type="evidence" value="ECO:0007669"/>
    <property type="project" value="UniProtKB-KW"/>
</dbReference>
<dbReference type="GO" id="GO:0015078">
    <property type="term" value="F:proton transmembrane transporter activity"/>
    <property type="evidence" value="ECO:0007669"/>
    <property type="project" value="InterPro"/>
</dbReference>
<dbReference type="GO" id="GO:0015986">
    <property type="term" value="P:proton motive force-driven ATP synthesis"/>
    <property type="evidence" value="ECO:0000318"/>
    <property type="project" value="GO_Central"/>
</dbReference>
<dbReference type="CDD" id="cd18182">
    <property type="entry name" value="ATP-synt_Fo_c_ATP5G3"/>
    <property type="match status" value="1"/>
</dbReference>
<dbReference type="FunFam" id="1.20.20.10:FF:000003">
    <property type="entry name" value="Atp synthase f complex subunit mitochondrial"/>
    <property type="match status" value="1"/>
</dbReference>
<dbReference type="Gene3D" id="1.20.20.10">
    <property type="entry name" value="F1F0 ATP synthase subunit C"/>
    <property type="match status" value="1"/>
</dbReference>
<dbReference type="HAMAP" id="MF_01396">
    <property type="entry name" value="ATP_synth_c_bact"/>
    <property type="match status" value="1"/>
</dbReference>
<dbReference type="InterPro" id="IPR000454">
    <property type="entry name" value="ATP_synth_F0_csu"/>
</dbReference>
<dbReference type="InterPro" id="IPR020537">
    <property type="entry name" value="ATP_synth_F0_csu_DDCD_BS"/>
</dbReference>
<dbReference type="InterPro" id="IPR038662">
    <property type="entry name" value="ATP_synth_F0_csu_sf"/>
</dbReference>
<dbReference type="InterPro" id="IPR002379">
    <property type="entry name" value="ATPase_proteolipid_c-like_dom"/>
</dbReference>
<dbReference type="InterPro" id="IPR035921">
    <property type="entry name" value="F/V-ATP_Csub_sf"/>
</dbReference>
<dbReference type="PANTHER" id="PTHR10031">
    <property type="entry name" value="ATP SYNTHASE LIPID-BINDING PROTEIN, MITOCHONDRIAL"/>
    <property type="match status" value="1"/>
</dbReference>
<dbReference type="PANTHER" id="PTHR10031:SF0">
    <property type="entry name" value="ATPASE PROTEIN 9"/>
    <property type="match status" value="1"/>
</dbReference>
<dbReference type="Pfam" id="PF00137">
    <property type="entry name" value="ATP-synt_C"/>
    <property type="match status" value="1"/>
</dbReference>
<dbReference type="PRINTS" id="PR00124">
    <property type="entry name" value="ATPASEC"/>
</dbReference>
<dbReference type="SUPFAM" id="SSF81333">
    <property type="entry name" value="F1F0 ATP synthase subunit C"/>
    <property type="match status" value="1"/>
</dbReference>
<dbReference type="PROSITE" id="PS00605">
    <property type="entry name" value="ATPASE_C"/>
    <property type="match status" value="1"/>
</dbReference>
<sequence>MFACSKFVSTPSLVKSTSQLLSRPLSAVVLKRPEILTDESLSSLAVSCPLTSLVSSRSFQTSAISRDIDTAAKFIGAGAATVGVAGSGAGIGTVFGSLIIGYARNPSLKQQLFSYAILGFALSEAMGLFCLMVAFLILFAM</sequence>
<reference key="1">
    <citation type="journal article" date="1993" name="Biochem. J.">
        <title>Sequences of members of the human gene family for the c subunit of mitochondrial ATP synthase.</title>
        <authorList>
            <person name="Dyer M.R."/>
            <person name="Walker J.E."/>
        </authorList>
    </citation>
    <scope>NUCLEOTIDE SEQUENCE [GENOMIC DNA]</scope>
</reference>
<reference key="2">
    <citation type="journal article" date="1993" name="Biochim. Biophys. Acta">
        <title>Molecular cloning and sequence of two cDNAs for human subunit c of H(+)-ATP synthase in mitochondria.</title>
        <authorList>
            <person name="Higuti T."/>
            <person name="Kawamura Y."/>
            <person name="Kuroiwa K."/>
            <person name="Miyazaki S."/>
            <person name="Tsujita H."/>
        </authorList>
    </citation>
    <scope>NUCLEOTIDE SEQUENCE [MRNA] (ISOFORM 1)</scope>
</reference>
<reference key="3">
    <citation type="journal article" date="2005" name="DNA Res.">
        <title>Signal sequence and keyword trap in silico for selection of full-length human cDNAs encoding secretion or membrane proteins from oligo-capped cDNA libraries.</title>
        <authorList>
            <person name="Otsuki T."/>
            <person name="Ota T."/>
            <person name="Nishikawa T."/>
            <person name="Hayashi K."/>
            <person name="Suzuki Y."/>
            <person name="Yamamoto J."/>
            <person name="Wakamatsu A."/>
            <person name="Kimura K."/>
            <person name="Sakamoto K."/>
            <person name="Hatano N."/>
            <person name="Kawai Y."/>
            <person name="Ishii S."/>
            <person name="Saito K."/>
            <person name="Kojima S."/>
            <person name="Sugiyama T."/>
            <person name="Ono T."/>
            <person name="Okano K."/>
            <person name="Yoshikawa Y."/>
            <person name="Aotsuka S."/>
            <person name="Sasaki N."/>
            <person name="Hattori A."/>
            <person name="Okumura K."/>
            <person name="Nagai K."/>
            <person name="Sugano S."/>
            <person name="Isogai T."/>
        </authorList>
    </citation>
    <scope>NUCLEOTIDE SEQUENCE [LARGE SCALE MRNA] (ISOFORM 1)</scope>
</reference>
<reference key="4">
    <citation type="journal article" date="2006" name="Nature">
        <title>The finished DNA sequence of human chromosome 12.</title>
        <authorList>
            <person name="Scherer S.E."/>
            <person name="Muzny D.M."/>
            <person name="Buhay C.J."/>
            <person name="Chen R."/>
            <person name="Cree A."/>
            <person name="Ding Y."/>
            <person name="Dugan-Rocha S."/>
            <person name="Gill R."/>
            <person name="Gunaratne P."/>
            <person name="Harris R.A."/>
            <person name="Hawes A.C."/>
            <person name="Hernandez J."/>
            <person name="Hodgson A.V."/>
            <person name="Hume J."/>
            <person name="Jackson A."/>
            <person name="Khan Z.M."/>
            <person name="Kovar-Smith C."/>
            <person name="Lewis L.R."/>
            <person name="Lozado R.J."/>
            <person name="Metzker M.L."/>
            <person name="Milosavljevic A."/>
            <person name="Miner G.R."/>
            <person name="Montgomery K.T."/>
            <person name="Morgan M.B."/>
            <person name="Nazareth L.V."/>
            <person name="Scott G."/>
            <person name="Sodergren E."/>
            <person name="Song X.-Z."/>
            <person name="Steffen D."/>
            <person name="Lovering R.C."/>
            <person name="Wheeler D.A."/>
            <person name="Worley K.C."/>
            <person name="Yuan Y."/>
            <person name="Zhang Z."/>
            <person name="Adams C.Q."/>
            <person name="Ansari-Lari M.A."/>
            <person name="Ayele M."/>
            <person name="Brown M.J."/>
            <person name="Chen G."/>
            <person name="Chen Z."/>
            <person name="Clerc-Blankenburg K.P."/>
            <person name="Davis C."/>
            <person name="Delgado O."/>
            <person name="Dinh H.H."/>
            <person name="Draper H."/>
            <person name="Gonzalez-Garay M.L."/>
            <person name="Havlak P."/>
            <person name="Jackson L.R."/>
            <person name="Jacob L.S."/>
            <person name="Kelly S.H."/>
            <person name="Li L."/>
            <person name="Li Z."/>
            <person name="Liu J."/>
            <person name="Liu W."/>
            <person name="Lu J."/>
            <person name="Maheshwari M."/>
            <person name="Nguyen B.-V."/>
            <person name="Okwuonu G.O."/>
            <person name="Pasternak S."/>
            <person name="Perez L.M."/>
            <person name="Plopper F.J.H."/>
            <person name="Santibanez J."/>
            <person name="Shen H."/>
            <person name="Tabor P.E."/>
            <person name="Verduzco D."/>
            <person name="Waldron L."/>
            <person name="Wang Q."/>
            <person name="Williams G.A."/>
            <person name="Zhang J."/>
            <person name="Zhou J."/>
            <person name="Allen C.C."/>
            <person name="Amin A.G."/>
            <person name="Anyalebechi V."/>
            <person name="Bailey M."/>
            <person name="Barbaria J.A."/>
            <person name="Bimage K.E."/>
            <person name="Bryant N.P."/>
            <person name="Burch P.E."/>
            <person name="Burkett C.E."/>
            <person name="Burrell K.L."/>
            <person name="Calderon E."/>
            <person name="Cardenas V."/>
            <person name="Carter K."/>
            <person name="Casias K."/>
            <person name="Cavazos I."/>
            <person name="Cavazos S.R."/>
            <person name="Ceasar H."/>
            <person name="Chacko J."/>
            <person name="Chan S.N."/>
            <person name="Chavez D."/>
            <person name="Christopoulos C."/>
            <person name="Chu J."/>
            <person name="Cockrell R."/>
            <person name="Cox C.D."/>
            <person name="Dang M."/>
            <person name="Dathorne S.R."/>
            <person name="David R."/>
            <person name="Davis C.M."/>
            <person name="Davy-Carroll L."/>
            <person name="Deshazo D.R."/>
            <person name="Donlin J.E."/>
            <person name="D'Souza L."/>
            <person name="Eaves K.A."/>
            <person name="Egan A."/>
            <person name="Emery-Cohen A.J."/>
            <person name="Escotto M."/>
            <person name="Flagg N."/>
            <person name="Forbes L.D."/>
            <person name="Gabisi A.M."/>
            <person name="Garza M."/>
            <person name="Hamilton C."/>
            <person name="Henderson N."/>
            <person name="Hernandez O."/>
            <person name="Hines S."/>
            <person name="Hogues M.E."/>
            <person name="Huang M."/>
            <person name="Idlebird D.G."/>
            <person name="Johnson R."/>
            <person name="Jolivet A."/>
            <person name="Jones S."/>
            <person name="Kagan R."/>
            <person name="King L.M."/>
            <person name="Leal B."/>
            <person name="Lebow H."/>
            <person name="Lee S."/>
            <person name="LeVan J.M."/>
            <person name="Lewis L.C."/>
            <person name="London P."/>
            <person name="Lorensuhewa L.M."/>
            <person name="Loulseged H."/>
            <person name="Lovett D.A."/>
            <person name="Lucier A."/>
            <person name="Lucier R.L."/>
            <person name="Ma J."/>
            <person name="Madu R.C."/>
            <person name="Mapua P."/>
            <person name="Martindale A.D."/>
            <person name="Martinez E."/>
            <person name="Massey E."/>
            <person name="Mawhiney S."/>
            <person name="Meador M.G."/>
            <person name="Mendez S."/>
            <person name="Mercado C."/>
            <person name="Mercado I.C."/>
            <person name="Merritt C.E."/>
            <person name="Miner Z.L."/>
            <person name="Minja E."/>
            <person name="Mitchell T."/>
            <person name="Mohabbat F."/>
            <person name="Mohabbat K."/>
            <person name="Montgomery B."/>
            <person name="Moore N."/>
            <person name="Morris S."/>
            <person name="Munidasa M."/>
            <person name="Ngo R.N."/>
            <person name="Nguyen N.B."/>
            <person name="Nickerson E."/>
            <person name="Nwaokelemeh O.O."/>
            <person name="Nwokenkwo S."/>
            <person name="Obregon M."/>
            <person name="Oguh M."/>
            <person name="Oragunye N."/>
            <person name="Oviedo R.J."/>
            <person name="Parish B.J."/>
            <person name="Parker D.N."/>
            <person name="Parrish J."/>
            <person name="Parks K.L."/>
            <person name="Paul H.A."/>
            <person name="Payton B.A."/>
            <person name="Perez A."/>
            <person name="Perrin W."/>
            <person name="Pickens A."/>
            <person name="Primus E.L."/>
            <person name="Pu L.-L."/>
            <person name="Puazo M."/>
            <person name="Quiles M.M."/>
            <person name="Quiroz J.B."/>
            <person name="Rabata D."/>
            <person name="Reeves K."/>
            <person name="Ruiz S.J."/>
            <person name="Shao H."/>
            <person name="Sisson I."/>
            <person name="Sonaike T."/>
            <person name="Sorelle R.P."/>
            <person name="Sutton A.E."/>
            <person name="Svatek A.F."/>
            <person name="Svetz L.A."/>
            <person name="Tamerisa K.S."/>
            <person name="Taylor T.R."/>
            <person name="Teague B."/>
            <person name="Thomas N."/>
            <person name="Thorn R.D."/>
            <person name="Trejos Z.Y."/>
            <person name="Trevino B.K."/>
            <person name="Ukegbu O.N."/>
            <person name="Urban J.B."/>
            <person name="Vasquez L.I."/>
            <person name="Vera V.A."/>
            <person name="Villasana D.M."/>
            <person name="Wang L."/>
            <person name="Ward-Moore S."/>
            <person name="Warren J.T."/>
            <person name="Wei X."/>
            <person name="White F."/>
            <person name="Williamson A.L."/>
            <person name="Wleczyk R."/>
            <person name="Wooden H.S."/>
            <person name="Wooden S.H."/>
            <person name="Yen J."/>
            <person name="Yoon L."/>
            <person name="Yoon V."/>
            <person name="Zorrilla S.E."/>
            <person name="Nelson D."/>
            <person name="Kucherlapati R."/>
            <person name="Weinstock G."/>
            <person name="Gibbs R.A."/>
        </authorList>
    </citation>
    <scope>NUCLEOTIDE SEQUENCE [LARGE SCALE GENOMIC DNA]</scope>
</reference>
<reference key="5">
    <citation type="journal article" date="2004" name="Genome Res.">
        <title>The status, quality, and expansion of the NIH full-length cDNA project: the Mammalian Gene Collection (MGC).</title>
        <authorList>
            <consortium name="The MGC Project Team"/>
        </authorList>
    </citation>
    <scope>NUCLEOTIDE SEQUENCE [LARGE SCALE MRNA] (ISOFORM 1)</scope>
    <source>
        <tissue>Lung</tissue>
    </source>
</reference>
<reference key="6">
    <citation type="journal article" date="1987" name="Biochem. Biophys. Res. Commun.">
        <title>Human liver cDNA clones encoding proteolipid subunit 9 of the mitochondrial ATPase complex.</title>
        <authorList>
            <person name="Farrell L.B."/>
            <person name="Nagley P."/>
        </authorList>
    </citation>
    <scope>NUCLEOTIDE SEQUENCE [MRNA] OF 87-141 (ISOFORMS 1/2/3)</scope>
    <source>
        <tissue>Liver</tissue>
    </source>
</reference>
<reference key="7">
    <citation type="journal article" date="2018" name="Cell">
        <title>The 7q11.23 protein DNAJC30 interacts with ATP synthase and links mitochondria to brain development.</title>
        <authorList>
            <person name="Tebbenkamp A.T.N."/>
            <person name="Varela L."/>
            <person name="Choi J."/>
            <person name="Paredes M.I."/>
            <person name="Giani A.M."/>
            <person name="Song J.E."/>
            <person name="Sestan-Pesa M."/>
            <person name="Franjic D."/>
            <person name="Sousa A.M.M."/>
            <person name="Liu Z.W."/>
            <person name="Li M."/>
            <person name="Bichsel C."/>
            <person name="Koch M."/>
            <person name="Szigeti-Buck K."/>
            <person name="Liu F."/>
            <person name="Li Z."/>
            <person name="Kawasawa Y.I."/>
            <person name="Paspalas C.D."/>
            <person name="Mineur Y.S."/>
            <person name="Prontera P."/>
            <person name="Merla G."/>
            <person name="Picciotto M.R."/>
            <person name="Arnsten A.F.T."/>
            <person name="Horvath T.L."/>
            <person name="Sestan N."/>
        </authorList>
    </citation>
    <scope>INTERACTION WITH DNAJC30</scope>
</reference>
<reference key="8">
    <citation type="journal article" date="2019" name="J. Biol. Chem.">
        <title>Lysine methylation by the mitochondrial methyltransferase FAM173B optimizes the function of mitochondrial ATP synthase.</title>
        <authorList>
            <person name="Malecki J.M."/>
            <person name="Willemen H.L.D.M."/>
            <person name="Pinto R."/>
            <person name="Ho A.Y.Y."/>
            <person name="Moen A."/>
            <person name="Kjoenstad I.F."/>
            <person name="Burgering B.M.T."/>
            <person name="Zwartkruis F."/>
            <person name="Eijkelkamp N."/>
            <person name="Falnes P.O."/>
        </authorList>
    </citation>
    <scope>METHYLATION AT LYS-109</scope>
</reference>
<gene>
    <name evidence="7" type="primary">ATP5MC2</name>
    <name evidence="7" type="synonym">ATP5G2</name>
    <name type="ORF">PSEC0033</name>
</gene>
<protein>
    <recommendedName>
        <fullName evidence="6">ATP synthase F(0) complex subunit C2, mitochondrial</fullName>
    </recommendedName>
    <alternativeName>
        <fullName>ATP synthase lipid-binding protein</fullName>
    </alternativeName>
    <alternativeName>
        <fullName evidence="7">ATP synthase membrane subunit c locus 2</fullName>
    </alternativeName>
    <alternativeName>
        <fullName>ATP synthase proteolipid P2</fullName>
    </alternativeName>
    <alternativeName>
        <fullName>ATP synthase proton-transporting mitochondrial F(0) complex subunit C2</fullName>
    </alternativeName>
    <alternativeName>
        <fullName>ATPase protein 9</fullName>
    </alternativeName>
    <alternativeName>
        <fullName>ATPase subunit c</fullName>
    </alternativeName>
</protein>
<proteinExistence type="evidence at protein level"/>